<sequence length="368" mass="40950">MSESPKKVIVGMSGGVDSSVSAWLLQQQGYQVEGLFMKNWEEDDGEEYCTAAADLADAQAVCDKLGIELHTVNFAAEYWDNVFELFLEEYKAGRTPNPDILCNKEIKFKAFLEFAAEDLGADYIATGHYVRRADVDGKSRLLRGLDGNKDQSYFLYTLGHEQIAQSLFPVGELEKPQVRKIAEDLGLITAKKKDSTGICFIGERKFREFLGRYLPAQPGKIITVDGDEIGQHQGLMYHTLGQRKGLGIGGTKEGTEDPWYVVDKDVENNILVVAQGHEHPRLMSVGLIAQQLHWVDREPFSGTLRCTVKTRYRQTDIPCTVKALDDERIEVIFDEPVAAVTPGQSAVFYNGEVCLGGGIIEQRLPLPV</sequence>
<reference key="1">
    <citation type="submission" date="2007-08" db="EMBL/GenBank/DDBJ databases">
        <authorList>
            <consortium name="The Citrobacter koseri Genome Sequencing Project"/>
            <person name="McClelland M."/>
            <person name="Sanderson E.K."/>
            <person name="Porwollik S."/>
            <person name="Spieth J."/>
            <person name="Clifton W.S."/>
            <person name="Latreille P."/>
            <person name="Courtney L."/>
            <person name="Wang C."/>
            <person name="Pepin K."/>
            <person name="Bhonagiri V."/>
            <person name="Nash W."/>
            <person name="Johnson M."/>
            <person name="Thiruvilangam P."/>
            <person name="Wilson R."/>
        </authorList>
    </citation>
    <scope>NUCLEOTIDE SEQUENCE [LARGE SCALE GENOMIC DNA]</scope>
    <source>
        <strain>ATCC BAA-895 / CDC 4225-83 / SGSC4696</strain>
    </source>
</reference>
<protein>
    <recommendedName>
        <fullName evidence="1">tRNA-specific 2-thiouridylase MnmA</fullName>
        <ecNumber evidence="1">2.8.1.13</ecNumber>
    </recommendedName>
</protein>
<comment type="function">
    <text evidence="1">Catalyzes the 2-thiolation of uridine at the wobble position (U34) of tRNA(Lys), tRNA(Glu) and tRNA(Gln), leading to the formation of s(2)U34, the first step of tRNA-mnm(5)s(2)U34 synthesis. Sulfur is provided by IscS, via a sulfur-relay system. Binds ATP and its substrate tRNAs.</text>
</comment>
<comment type="catalytic activity">
    <reaction evidence="1">
        <text>S-sulfanyl-L-cysteinyl-[protein] + uridine(34) in tRNA + AH2 + ATP = 2-thiouridine(34) in tRNA + L-cysteinyl-[protein] + A + AMP + diphosphate + H(+)</text>
        <dbReference type="Rhea" id="RHEA:47032"/>
        <dbReference type="Rhea" id="RHEA-COMP:10131"/>
        <dbReference type="Rhea" id="RHEA-COMP:11726"/>
        <dbReference type="Rhea" id="RHEA-COMP:11727"/>
        <dbReference type="Rhea" id="RHEA-COMP:11728"/>
        <dbReference type="ChEBI" id="CHEBI:13193"/>
        <dbReference type="ChEBI" id="CHEBI:15378"/>
        <dbReference type="ChEBI" id="CHEBI:17499"/>
        <dbReference type="ChEBI" id="CHEBI:29950"/>
        <dbReference type="ChEBI" id="CHEBI:30616"/>
        <dbReference type="ChEBI" id="CHEBI:33019"/>
        <dbReference type="ChEBI" id="CHEBI:61963"/>
        <dbReference type="ChEBI" id="CHEBI:65315"/>
        <dbReference type="ChEBI" id="CHEBI:87170"/>
        <dbReference type="ChEBI" id="CHEBI:456215"/>
        <dbReference type="EC" id="2.8.1.13"/>
    </reaction>
</comment>
<comment type="subunit">
    <text evidence="1">Interacts with TusE.</text>
</comment>
<comment type="subcellular location">
    <subcellularLocation>
        <location evidence="1">Cytoplasm</location>
    </subcellularLocation>
</comment>
<comment type="similarity">
    <text evidence="1">Belongs to the MnmA/TRMU family.</text>
</comment>
<comment type="sequence caution" evidence="2">
    <conflict type="erroneous initiation">
        <sequence resource="EMBL-CDS" id="ABV12965"/>
    </conflict>
</comment>
<organism>
    <name type="scientific">Citrobacter koseri (strain ATCC BAA-895 / CDC 4225-83 / SGSC4696)</name>
    <dbReference type="NCBI Taxonomy" id="290338"/>
    <lineage>
        <taxon>Bacteria</taxon>
        <taxon>Pseudomonadati</taxon>
        <taxon>Pseudomonadota</taxon>
        <taxon>Gammaproteobacteria</taxon>
        <taxon>Enterobacterales</taxon>
        <taxon>Enterobacteriaceae</taxon>
        <taxon>Citrobacter</taxon>
    </lineage>
</organism>
<keyword id="KW-0067">ATP-binding</keyword>
<keyword id="KW-0963">Cytoplasm</keyword>
<keyword id="KW-1015">Disulfide bond</keyword>
<keyword id="KW-0547">Nucleotide-binding</keyword>
<keyword id="KW-1185">Reference proteome</keyword>
<keyword id="KW-0694">RNA-binding</keyword>
<keyword id="KW-0808">Transferase</keyword>
<keyword id="KW-0819">tRNA processing</keyword>
<keyword id="KW-0820">tRNA-binding</keyword>
<evidence type="ECO:0000255" key="1">
    <source>
        <dbReference type="HAMAP-Rule" id="MF_00144"/>
    </source>
</evidence>
<evidence type="ECO:0000305" key="2"/>
<feature type="chain" id="PRO_0000349582" description="tRNA-specific 2-thiouridylase MnmA">
    <location>
        <begin position="1"/>
        <end position="368"/>
    </location>
</feature>
<feature type="region of interest" description="Interaction with target base in tRNA" evidence="1">
    <location>
        <begin position="97"/>
        <end position="99"/>
    </location>
</feature>
<feature type="region of interest" description="Interaction with tRNA" evidence="1">
    <location>
        <begin position="149"/>
        <end position="151"/>
    </location>
</feature>
<feature type="region of interest" description="Interaction with tRNA" evidence="1">
    <location>
        <begin position="311"/>
        <end position="312"/>
    </location>
</feature>
<feature type="active site" description="Nucleophile" evidence="1">
    <location>
        <position position="102"/>
    </location>
</feature>
<feature type="active site" description="Cysteine persulfide intermediate" evidence="1">
    <location>
        <position position="199"/>
    </location>
</feature>
<feature type="binding site" evidence="1">
    <location>
        <begin position="11"/>
        <end position="18"/>
    </location>
    <ligand>
        <name>ATP</name>
        <dbReference type="ChEBI" id="CHEBI:30616"/>
    </ligand>
</feature>
<feature type="binding site" evidence="1">
    <location>
        <position position="37"/>
    </location>
    <ligand>
        <name>ATP</name>
        <dbReference type="ChEBI" id="CHEBI:30616"/>
    </ligand>
</feature>
<feature type="binding site" evidence="1">
    <location>
        <position position="127"/>
    </location>
    <ligand>
        <name>ATP</name>
        <dbReference type="ChEBI" id="CHEBI:30616"/>
    </ligand>
</feature>
<feature type="site" description="Interaction with tRNA" evidence="1">
    <location>
        <position position="128"/>
    </location>
</feature>
<feature type="site" description="Interaction with tRNA" evidence="1">
    <location>
        <position position="344"/>
    </location>
</feature>
<feature type="disulfide bond" description="Alternate" evidence="1">
    <location>
        <begin position="102"/>
        <end position="199"/>
    </location>
</feature>
<proteinExistence type="inferred from homology"/>
<dbReference type="EC" id="2.8.1.13" evidence="1"/>
<dbReference type="EMBL" id="CP000822">
    <property type="protein sequence ID" value="ABV12965.1"/>
    <property type="status" value="ALT_INIT"/>
    <property type="molecule type" value="Genomic_DNA"/>
</dbReference>
<dbReference type="RefSeq" id="WP_024130406.1">
    <property type="nucleotide sequence ID" value="NC_009792.1"/>
</dbReference>
<dbReference type="SMR" id="A8AHK2"/>
<dbReference type="STRING" id="290338.CKO_01838"/>
<dbReference type="GeneID" id="45135844"/>
<dbReference type="KEGG" id="cko:CKO_01838"/>
<dbReference type="HOGENOM" id="CLU_035188_1_0_6"/>
<dbReference type="OrthoDB" id="9800696at2"/>
<dbReference type="Proteomes" id="UP000008148">
    <property type="component" value="Chromosome"/>
</dbReference>
<dbReference type="GO" id="GO:0005737">
    <property type="term" value="C:cytoplasm"/>
    <property type="evidence" value="ECO:0007669"/>
    <property type="project" value="UniProtKB-SubCell"/>
</dbReference>
<dbReference type="GO" id="GO:0005524">
    <property type="term" value="F:ATP binding"/>
    <property type="evidence" value="ECO:0007669"/>
    <property type="project" value="UniProtKB-KW"/>
</dbReference>
<dbReference type="GO" id="GO:0000049">
    <property type="term" value="F:tRNA binding"/>
    <property type="evidence" value="ECO:0007669"/>
    <property type="project" value="UniProtKB-KW"/>
</dbReference>
<dbReference type="GO" id="GO:0103016">
    <property type="term" value="F:tRNA-uridine 2-sulfurtransferase activity"/>
    <property type="evidence" value="ECO:0007669"/>
    <property type="project" value="UniProtKB-EC"/>
</dbReference>
<dbReference type="GO" id="GO:0002143">
    <property type="term" value="P:tRNA wobble position uridine thiolation"/>
    <property type="evidence" value="ECO:0007669"/>
    <property type="project" value="TreeGrafter"/>
</dbReference>
<dbReference type="CDD" id="cd01998">
    <property type="entry name" value="MnmA_TRMU-like"/>
    <property type="match status" value="1"/>
</dbReference>
<dbReference type="FunFam" id="2.30.30.280:FF:000001">
    <property type="entry name" value="tRNA-specific 2-thiouridylase MnmA"/>
    <property type="match status" value="1"/>
</dbReference>
<dbReference type="FunFam" id="2.40.30.10:FF:000023">
    <property type="entry name" value="tRNA-specific 2-thiouridylase MnmA"/>
    <property type="match status" value="1"/>
</dbReference>
<dbReference type="FunFam" id="3.40.50.620:FF:000004">
    <property type="entry name" value="tRNA-specific 2-thiouridylase MnmA"/>
    <property type="match status" value="1"/>
</dbReference>
<dbReference type="Gene3D" id="2.30.30.280">
    <property type="entry name" value="Adenine nucleotide alpha hydrolases-like domains"/>
    <property type="match status" value="1"/>
</dbReference>
<dbReference type="Gene3D" id="3.40.50.620">
    <property type="entry name" value="HUPs"/>
    <property type="match status" value="1"/>
</dbReference>
<dbReference type="Gene3D" id="2.40.30.10">
    <property type="entry name" value="Translation factors"/>
    <property type="match status" value="1"/>
</dbReference>
<dbReference type="HAMAP" id="MF_00144">
    <property type="entry name" value="tRNA_thiouridyl_MnmA"/>
    <property type="match status" value="1"/>
</dbReference>
<dbReference type="InterPro" id="IPR004506">
    <property type="entry name" value="MnmA-like"/>
</dbReference>
<dbReference type="InterPro" id="IPR046885">
    <property type="entry name" value="MnmA-like_C"/>
</dbReference>
<dbReference type="InterPro" id="IPR046884">
    <property type="entry name" value="MnmA-like_central"/>
</dbReference>
<dbReference type="InterPro" id="IPR023382">
    <property type="entry name" value="MnmA-like_central_sf"/>
</dbReference>
<dbReference type="InterPro" id="IPR014729">
    <property type="entry name" value="Rossmann-like_a/b/a_fold"/>
</dbReference>
<dbReference type="NCBIfam" id="NF001138">
    <property type="entry name" value="PRK00143.1"/>
    <property type="match status" value="1"/>
</dbReference>
<dbReference type="NCBIfam" id="TIGR00420">
    <property type="entry name" value="trmU"/>
    <property type="match status" value="1"/>
</dbReference>
<dbReference type="PANTHER" id="PTHR11933:SF5">
    <property type="entry name" value="MITOCHONDRIAL TRNA-SPECIFIC 2-THIOURIDYLASE 1"/>
    <property type="match status" value="1"/>
</dbReference>
<dbReference type="PANTHER" id="PTHR11933">
    <property type="entry name" value="TRNA 5-METHYLAMINOMETHYL-2-THIOURIDYLATE -METHYLTRANSFERASE"/>
    <property type="match status" value="1"/>
</dbReference>
<dbReference type="Pfam" id="PF03054">
    <property type="entry name" value="tRNA_Me_trans"/>
    <property type="match status" value="1"/>
</dbReference>
<dbReference type="Pfam" id="PF20258">
    <property type="entry name" value="tRNA_Me_trans_C"/>
    <property type="match status" value="1"/>
</dbReference>
<dbReference type="Pfam" id="PF20259">
    <property type="entry name" value="tRNA_Me_trans_M"/>
    <property type="match status" value="1"/>
</dbReference>
<dbReference type="SUPFAM" id="SSF52402">
    <property type="entry name" value="Adenine nucleotide alpha hydrolases-like"/>
    <property type="match status" value="1"/>
</dbReference>
<name>MNMA_CITK8</name>
<accession>A8AHK2</accession>
<gene>
    <name evidence="1" type="primary">mnmA</name>
    <name type="ordered locus">CKO_01838</name>
</gene>